<sequence length="146" mass="16468">MLSQIYPQAQHPYSFELNKDMHISAAHFIPRESAGACSRVHGHTYTVNITVAGDELDDSGFLVNFSVLKKLVHGNYDHTLLNDHEDFSQDDRYSLPTTEVVAKTIYDNVQAYLDTLENKPTCVQVFVRETPTSYCVYRPKKGGLNG</sequence>
<feature type="chain" id="PRO_0000392070" description="6-carboxy-5,6,7,8-tetrahydropterin synthase">
    <location>
        <begin position="1"/>
        <end position="146"/>
    </location>
</feature>
<feature type="active site" description="Proton acceptor" evidence="1">
    <location>
        <position position="37"/>
    </location>
</feature>
<feature type="active site" description="Charge relay system" evidence="1">
    <location>
        <position position="78"/>
    </location>
</feature>
<feature type="active site" description="Charge relay system" evidence="1">
    <location>
        <position position="129"/>
    </location>
</feature>
<feature type="binding site" evidence="1">
    <location>
        <position position="27"/>
    </location>
    <ligand>
        <name>Zn(2+)</name>
        <dbReference type="ChEBI" id="CHEBI:29105"/>
    </ligand>
</feature>
<feature type="binding site" evidence="1">
    <location>
        <position position="41"/>
    </location>
    <ligand>
        <name>Zn(2+)</name>
        <dbReference type="ChEBI" id="CHEBI:29105"/>
    </ligand>
</feature>
<feature type="binding site" evidence="1">
    <location>
        <position position="43"/>
    </location>
    <ligand>
        <name>Zn(2+)</name>
        <dbReference type="ChEBI" id="CHEBI:29105"/>
    </ligand>
</feature>
<comment type="function">
    <text evidence="1 2">Catalyzes the conversion of 7,8-dihydroneopterin triphosphate (H2NTP) to 6-carboxy-5,6,7,8-tetrahydropterin (CPH4) and acetaldehyde.</text>
</comment>
<comment type="catalytic activity">
    <reaction>
        <text>7,8-dihydroneopterin 3'-triphosphate + H2O = 6-carboxy-5,6,7,8-tetrahydropterin + triphosphate + acetaldehyde + 2 H(+)</text>
        <dbReference type="Rhea" id="RHEA:27966"/>
        <dbReference type="ChEBI" id="CHEBI:15343"/>
        <dbReference type="ChEBI" id="CHEBI:15377"/>
        <dbReference type="ChEBI" id="CHEBI:15378"/>
        <dbReference type="ChEBI" id="CHEBI:18036"/>
        <dbReference type="ChEBI" id="CHEBI:58462"/>
        <dbReference type="ChEBI" id="CHEBI:61032"/>
        <dbReference type="EC" id="4.1.2.50"/>
    </reaction>
</comment>
<comment type="cofactor">
    <cofactor evidence="1">
        <name>Zn(2+)</name>
        <dbReference type="ChEBI" id="CHEBI:29105"/>
    </cofactor>
    <text evidence="1">Binds 1 zinc ion per subunit.</text>
</comment>
<comment type="pathway">
    <text>Purine metabolism; 7-cyano-7-deazaguanine biosynthesis.</text>
</comment>
<comment type="subunit">
    <text evidence="3">Homotetramer.</text>
</comment>
<comment type="miscellaneous">
    <text evidence="1">The active site is at the interface between 2 subunits. The proton acceptor Cys is on one subunit, and the charge relay system is on the other subunit (By similarity).</text>
</comment>
<comment type="similarity">
    <text evidence="4">Belongs to the PTPS family. QueD subfamily.</text>
</comment>
<comment type="sequence caution" evidence="4">
    <conflict type="erroneous initiation">
        <sequence resource="EMBL-CDS" id="CAB13246"/>
    </conflict>
</comment>
<keyword id="KW-0456">Lyase</keyword>
<keyword id="KW-0479">Metal-binding</keyword>
<keyword id="KW-0671">Queuosine biosynthesis</keyword>
<keyword id="KW-1185">Reference proteome</keyword>
<keyword id="KW-0862">Zinc</keyword>
<name>QUED_BACSU</name>
<protein>
    <recommendedName>
        <fullName>6-carboxy-5,6,7,8-tetrahydropterin synthase</fullName>
        <shortName>CPH4 synthase</shortName>
        <ecNumber>4.1.2.50</ecNumber>
    </recommendedName>
    <alternativeName>
        <fullName>Queuosine biosynthesis protein QueD</fullName>
    </alternativeName>
</protein>
<gene>
    <name type="primary">queD</name>
    <name type="synonym">ykvK</name>
    <name type="ordered locus">BSU13730</name>
</gene>
<organism>
    <name type="scientific">Bacillus subtilis (strain 168)</name>
    <dbReference type="NCBI Taxonomy" id="224308"/>
    <lineage>
        <taxon>Bacteria</taxon>
        <taxon>Bacillati</taxon>
        <taxon>Bacillota</taxon>
        <taxon>Bacilli</taxon>
        <taxon>Bacillales</taxon>
        <taxon>Bacillaceae</taxon>
        <taxon>Bacillus</taxon>
    </lineage>
</organism>
<accession>O31676</accession>
<proteinExistence type="evidence at protein level"/>
<reference key="1">
    <citation type="journal article" date="1997" name="Nature">
        <title>The complete genome sequence of the Gram-positive bacterium Bacillus subtilis.</title>
        <authorList>
            <person name="Kunst F."/>
            <person name="Ogasawara N."/>
            <person name="Moszer I."/>
            <person name="Albertini A.M."/>
            <person name="Alloni G."/>
            <person name="Azevedo V."/>
            <person name="Bertero M.G."/>
            <person name="Bessieres P."/>
            <person name="Bolotin A."/>
            <person name="Borchert S."/>
            <person name="Borriss R."/>
            <person name="Boursier L."/>
            <person name="Brans A."/>
            <person name="Braun M."/>
            <person name="Brignell S.C."/>
            <person name="Bron S."/>
            <person name="Brouillet S."/>
            <person name="Bruschi C.V."/>
            <person name="Caldwell B."/>
            <person name="Capuano V."/>
            <person name="Carter N.M."/>
            <person name="Choi S.-K."/>
            <person name="Codani J.-J."/>
            <person name="Connerton I.F."/>
            <person name="Cummings N.J."/>
            <person name="Daniel R.A."/>
            <person name="Denizot F."/>
            <person name="Devine K.M."/>
            <person name="Duesterhoeft A."/>
            <person name="Ehrlich S.D."/>
            <person name="Emmerson P.T."/>
            <person name="Entian K.-D."/>
            <person name="Errington J."/>
            <person name="Fabret C."/>
            <person name="Ferrari E."/>
            <person name="Foulger D."/>
            <person name="Fritz C."/>
            <person name="Fujita M."/>
            <person name="Fujita Y."/>
            <person name="Fuma S."/>
            <person name="Galizzi A."/>
            <person name="Galleron N."/>
            <person name="Ghim S.-Y."/>
            <person name="Glaser P."/>
            <person name="Goffeau A."/>
            <person name="Golightly E.J."/>
            <person name="Grandi G."/>
            <person name="Guiseppi G."/>
            <person name="Guy B.J."/>
            <person name="Haga K."/>
            <person name="Haiech J."/>
            <person name="Harwood C.R."/>
            <person name="Henaut A."/>
            <person name="Hilbert H."/>
            <person name="Holsappel S."/>
            <person name="Hosono S."/>
            <person name="Hullo M.-F."/>
            <person name="Itaya M."/>
            <person name="Jones L.-M."/>
            <person name="Joris B."/>
            <person name="Karamata D."/>
            <person name="Kasahara Y."/>
            <person name="Klaerr-Blanchard M."/>
            <person name="Klein C."/>
            <person name="Kobayashi Y."/>
            <person name="Koetter P."/>
            <person name="Koningstein G."/>
            <person name="Krogh S."/>
            <person name="Kumano M."/>
            <person name="Kurita K."/>
            <person name="Lapidus A."/>
            <person name="Lardinois S."/>
            <person name="Lauber J."/>
            <person name="Lazarevic V."/>
            <person name="Lee S.-M."/>
            <person name="Levine A."/>
            <person name="Liu H."/>
            <person name="Masuda S."/>
            <person name="Mauel C."/>
            <person name="Medigue C."/>
            <person name="Medina N."/>
            <person name="Mellado R.P."/>
            <person name="Mizuno M."/>
            <person name="Moestl D."/>
            <person name="Nakai S."/>
            <person name="Noback M."/>
            <person name="Noone D."/>
            <person name="O'Reilly M."/>
            <person name="Ogawa K."/>
            <person name="Ogiwara A."/>
            <person name="Oudega B."/>
            <person name="Park S.-H."/>
            <person name="Parro V."/>
            <person name="Pohl T.M."/>
            <person name="Portetelle D."/>
            <person name="Porwollik S."/>
            <person name="Prescott A.M."/>
            <person name="Presecan E."/>
            <person name="Pujic P."/>
            <person name="Purnelle B."/>
            <person name="Rapoport G."/>
            <person name="Rey M."/>
            <person name="Reynolds S."/>
            <person name="Rieger M."/>
            <person name="Rivolta C."/>
            <person name="Rocha E."/>
            <person name="Roche B."/>
            <person name="Rose M."/>
            <person name="Sadaie Y."/>
            <person name="Sato T."/>
            <person name="Scanlan E."/>
            <person name="Schleich S."/>
            <person name="Schroeter R."/>
            <person name="Scoffone F."/>
            <person name="Sekiguchi J."/>
            <person name="Sekowska A."/>
            <person name="Seror S.J."/>
            <person name="Serror P."/>
            <person name="Shin B.-S."/>
            <person name="Soldo B."/>
            <person name="Sorokin A."/>
            <person name="Tacconi E."/>
            <person name="Takagi T."/>
            <person name="Takahashi H."/>
            <person name="Takemaru K."/>
            <person name="Takeuchi M."/>
            <person name="Tamakoshi A."/>
            <person name="Tanaka T."/>
            <person name="Terpstra P."/>
            <person name="Tognoni A."/>
            <person name="Tosato V."/>
            <person name="Uchiyama S."/>
            <person name="Vandenbol M."/>
            <person name="Vannier F."/>
            <person name="Vassarotti A."/>
            <person name="Viari A."/>
            <person name="Wambutt R."/>
            <person name="Wedler E."/>
            <person name="Wedler H."/>
            <person name="Weitzenegger T."/>
            <person name="Winters P."/>
            <person name="Wipat A."/>
            <person name="Yamamoto H."/>
            <person name="Yamane K."/>
            <person name="Yasumoto K."/>
            <person name="Yata K."/>
            <person name="Yoshida K."/>
            <person name="Yoshikawa H.-F."/>
            <person name="Zumstein E."/>
            <person name="Yoshikawa H."/>
            <person name="Danchin A."/>
        </authorList>
    </citation>
    <scope>NUCLEOTIDE SEQUENCE [LARGE SCALE GENOMIC DNA]</scope>
    <source>
        <strain>168</strain>
    </source>
</reference>
<reference key="2">
    <citation type="journal article" date="2004" name="J. Biol. Chem.">
        <title>Identification of four genes necessary for biosynthesis of the modified nucleoside queuosine.</title>
        <authorList>
            <person name="Reader J.S."/>
            <person name="Metzgar D."/>
            <person name="Schimmel P."/>
            <person name="de Crecy-Lagard V."/>
        </authorList>
    </citation>
    <scope>FUNCTION IN QUEUOSINE BIOSYNTHESIS</scope>
    <scope>GENE NAME</scope>
</reference>
<reference key="3">
    <citation type="journal article" date="2008" name="Acta Crystallogr. F">
        <title>Crystallization and preliminary X-ray characterization of queD from Bacillus subtilis, an enzyme involved in queuosine biosynthesis.</title>
        <authorList>
            <person name="Cicmil N."/>
            <person name="Shi L."/>
        </authorList>
    </citation>
    <scope>SUBUNIT</scope>
    <scope>CRYSTALLIZATION</scope>
</reference>
<evidence type="ECO:0000250" key="1"/>
<evidence type="ECO:0000269" key="2">
    <source>
    </source>
</evidence>
<evidence type="ECO:0000269" key="3">
    <source>
    </source>
</evidence>
<evidence type="ECO:0000305" key="4"/>
<dbReference type="EC" id="4.1.2.50"/>
<dbReference type="EMBL" id="AL009126">
    <property type="protein sequence ID" value="CAB13246.1"/>
    <property type="status" value="ALT_INIT"/>
    <property type="molecule type" value="Genomic_DNA"/>
</dbReference>
<dbReference type="PIR" id="B69868">
    <property type="entry name" value="B69868"/>
</dbReference>
<dbReference type="RefSeq" id="NP_389256.1">
    <property type="nucleotide sequence ID" value="NC_000964.3"/>
</dbReference>
<dbReference type="SMR" id="O31676"/>
<dbReference type="FunCoup" id="O31676">
    <property type="interactions" value="264"/>
</dbReference>
<dbReference type="STRING" id="224308.BSU13730"/>
<dbReference type="PaxDb" id="224308-BSU13730"/>
<dbReference type="EnsemblBacteria" id="CAB13246">
    <property type="protein sequence ID" value="CAB13246"/>
    <property type="gene ID" value="BSU_13730"/>
</dbReference>
<dbReference type="GeneID" id="939282"/>
<dbReference type="KEGG" id="bsu:BSU13730"/>
<dbReference type="PATRIC" id="fig|224308.179.peg.1490"/>
<dbReference type="eggNOG" id="COG0720">
    <property type="taxonomic scope" value="Bacteria"/>
</dbReference>
<dbReference type="InParanoid" id="O31676"/>
<dbReference type="OrthoDB" id="9804698at2"/>
<dbReference type="BioCyc" id="BSUB:BSU13730-MONOMER"/>
<dbReference type="BioCyc" id="MetaCyc:BSU13730-MONOMER"/>
<dbReference type="UniPathway" id="UPA00391"/>
<dbReference type="Proteomes" id="UP000001570">
    <property type="component" value="Chromosome"/>
</dbReference>
<dbReference type="GO" id="GO:0070497">
    <property type="term" value="F:6-carboxytetrahydropterin synthase activity"/>
    <property type="evidence" value="ECO:0007669"/>
    <property type="project" value="UniProtKB-EC"/>
</dbReference>
<dbReference type="GO" id="GO:0046872">
    <property type="term" value="F:metal ion binding"/>
    <property type="evidence" value="ECO:0007669"/>
    <property type="project" value="UniProtKB-KW"/>
</dbReference>
<dbReference type="GO" id="GO:0008616">
    <property type="term" value="P:queuosine biosynthetic process"/>
    <property type="evidence" value="ECO:0007669"/>
    <property type="project" value="UniProtKB-KW"/>
</dbReference>
<dbReference type="FunFam" id="3.30.479.10:FF:000006">
    <property type="entry name" value="6-carboxy-5,6,7,8-tetrahydropterin synthase"/>
    <property type="match status" value="1"/>
</dbReference>
<dbReference type="Gene3D" id="3.30.479.10">
    <property type="entry name" value="6-pyruvoyl tetrahydropterin synthase/QueD"/>
    <property type="match status" value="1"/>
</dbReference>
<dbReference type="InterPro" id="IPR007115">
    <property type="entry name" value="6-PTP_synth/QueD"/>
</dbReference>
<dbReference type="InterPro" id="IPR038418">
    <property type="entry name" value="6-PTP_synth/QueD_sf"/>
</dbReference>
<dbReference type="NCBIfam" id="TIGR00039">
    <property type="entry name" value="6PTHBS"/>
    <property type="match status" value="1"/>
</dbReference>
<dbReference type="NCBIfam" id="TIGR03367">
    <property type="entry name" value="queuosine_QueD"/>
    <property type="match status" value="1"/>
</dbReference>
<dbReference type="PANTHER" id="PTHR12589:SF7">
    <property type="entry name" value="6-PYRUVOYL TETRAHYDROBIOPTERIN SYNTHASE"/>
    <property type="match status" value="1"/>
</dbReference>
<dbReference type="PANTHER" id="PTHR12589">
    <property type="entry name" value="PYRUVOYL TETRAHYDROBIOPTERIN SYNTHASE"/>
    <property type="match status" value="1"/>
</dbReference>
<dbReference type="Pfam" id="PF01242">
    <property type="entry name" value="PTPS"/>
    <property type="match status" value="1"/>
</dbReference>
<dbReference type="PIRSF" id="PIRSF006113">
    <property type="entry name" value="PTP_synth"/>
    <property type="match status" value="1"/>
</dbReference>
<dbReference type="SUPFAM" id="SSF55620">
    <property type="entry name" value="Tetrahydrobiopterin biosynthesis enzymes-like"/>
    <property type="match status" value="1"/>
</dbReference>